<reference key="1">
    <citation type="journal article" date="2009" name="Vaccine">
        <title>Whole genome sequence analysis of Mycobacterium bovis bacillus Calmette-Guerin (BCG) Tokyo 172: a comparative study of BCG vaccine substrains.</title>
        <authorList>
            <person name="Seki M."/>
            <person name="Honda I."/>
            <person name="Fujita I."/>
            <person name="Yano I."/>
            <person name="Yamamoto S."/>
            <person name="Koyama A."/>
        </authorList>
    </citation>
    <scope>NUCLEOTIDE SEQUENCE [LARGE SCALE GENOMIC DNA]</scope>
    <source>
        <strain>BCG / Tokyo 172 / ATCC 35737 / TMC 1019</strain>
    </source>
</reference>
<keyword id="KW-0963">Cytoplasm</keyword>
<keyword id="KW-0227">DNA damage</keyword>
<keyword id="KW-0233">DNA recombination</keyword>
<keyword id="KW-0234">DNA repair</keyword>
<keyword id="KW-0238">DNA-binding</keyword>
<name>RUVA_MYCBT</name>
<comment type="function">
    <text evidence="1">The RuvA-RuvB-RuvC complex processes Holliday junction (HJ) DNA during genetic recombination and DNA repair, while the RuvA-RuvB complex plays an important role in the rescue of blocked DNA replication forks via replication fork reversal (RFR). RuvA specifically binds to HJ cruciform DNA, conferring on it an open structure. The RuvB hexamer acts as an ATP-dependent pump, pulling dsDNA into and through the RuvAB complex. HJ branch migration allows RuvC to scan DNA until it finds its consensus sequence, where it cleaves and resolves the cruciform DNA.</text>
</comment>
<comment type="subunit">
    <text evidence="1">Homotetramer. Forms an RuvA(8)-RuvB(12)-Holliday junction (HJ) complex. HJ DNA is sandwiched between 2 RuvA tetramers; dsDNA enters through RuvA and exits via RuvB. An RuvB hexamer assembles on each DNA strand where it exits the tetramer. Each RuvB hexamer is contacted by two RuvA subunits (via domain III) on 2 adjacent RuvB subunits; this complex drives branch migration. In the full resolvosome a probable DNA-RuvA(4)-RuvB(12)-RuvC(2) complex forms which resolves the HJ.</text>
</comment>
<comment type="subcellular location">
    <subcellularLocation>
        <location evidence="1">Cytoplasm</location>
    </subcellularLocation>
</comment>
<comment type="domain">
    <text evidence="1">Has three domains with a flexible linker between the domains II and III and assumes an 'L' shape. Domain III is highly mobile and contacts RuvB.</text>
</comment>
<comment type="similarity">
    <text evidence="1">Belongs to the RuvA family.</text>
</comment>
<dbReference type="EMBL" id="AP010918">
    <property type="protein sequence ID" value="BAH26891.1"/>
    <property type="molecule type" value="Genomic_DNA"/>
</dbReference>
<dbReference type="RefSeq" id="WP_003413421.1">
    <property type="nucleotide sequence ID" value="NZ_CP014566.1"/>
</dbReference>
<dbReference type="SMR" id="C1AF62"/>
<dbReference type="GeneID" id="45426595"/>
<dbReference type="KEGG" id="mbt:JTY_2610"/>
<dbReference type="HOGENOM" id="CLU_087936_2_1_11"/>
<dbReference type="GO" id="GO:0005737">
    <property type="term" value="C:cytoplasm"/>
    <property type="evidence" value="ECO:0007669"/>
    <property type="project" value="UniProtKB-SubCell"/>
</dbReference>
<dbReference type="GO" id="GO:0009379">
    <property type="term" value="C:Holliday junction helicase complex"/>
    <property type="evidence" value="ECO:0007669"/>
    <property type="project" value="InterPro"/>
</dbReference>
<dbReference type="GO" id="GO:0048476">
    <property type="term" value="C:Holliday junction resolvase complex"/>
    <property type="evidence" value="ECO:0007669"/>
    <property type="project" value="UniProtKB-UniRule"/>
</dbReference>
<dbReference type="GO" id="GO:0005524">
    <property type="term" value="F:ATP binding"/>
    <property type="evidence" value="ECO:0007669"/>
    <property type="project" value="InterPro"/>
</dbReference>
<dbReference type="GO" id="GO:0000400">
    <property type="term" value="F:four-way junction DNA binding"/>
    <property type="evidence" value="ECO:0007669"/>
    <property type="project" value="UniProtKB-UniRule"/>
</dbReference>
<dbReference type="GO" id="GO:0009378">
    <property type="term" value="F:four-way junction helicase activity"/>
    <property type="evidence" value="ECO:0007669"/>
    <property type="project" value="InterPro"/>
</dbReference>
<dbReference type="GO" id="GO:0006310">
    <property type="term" value="P:DNA recombination"/>
    <property type="evidence" value="ECO:0007669"/>
    <property type="project" value="UniProtKB-UniRule"/>
</dbReference>
<dbReference type="GO" id="GO:0006281">
    <property type="term" value="P:DNA repair"/>
    <property type="evidence" value="ECO:0007669"/>
    <property type="project" value="UniProtKB-UniRule"/>
</dbReference>
<dbReference type="CDD" id="cd14332">
    <property type="entry name" value="UBA_RuvA_C"/>
    <property type="match status" value="1"/>
</dbReference>
<dbReference type="FunFam" id="1.10.150.20:FF:000093">
    <property type="entry name" value="Holliday junction ATP-dependent DNA helicase RuvA"/>
    <property type="match status" value="1"/>
</dbReference>
<dbReference type="FunFam" id="2.40.50.140:FF:000083">
    <property type="entry name" value="Holliday junction ATP-dependent DNA helicase RuvA"/>
    <property type="match status" value="1"/>
</dbReference>
<dbReference type="Gene3D" id="1.10.150.20">
    <property type="entry name" value="5' to 3' exonuclease, C-terminal subdomain"/>
    <property type="match status" value="1"/>
</dbReference>
<dbReference type="Gene3D" id="1.10.8.10">
    <property type="entry name" value="DNA helicase RuvA subunit, C-terminal domain"/>
    <property type="match status" value="1"/>
</dbReference>
<dbReference type="Gene3D" id="2.40.50.140">
    <property type="entry name" value="Nucleic acid-binding proteins"/>
    <property type="match status" value="1"/>
</dbReference>
<dbReference type="HAMAP" id="MF_00031">
    <property type="entry name" value="DNA_HJ_migration_RuvA"/>
    <property type="match status" value="1"/>
</dbReference>
<dbReference type="InterPro" id="IPR013849">
    <property type="entry name" value="DNA_helicase_Holl-junc_RuvA_I"/>
</dbReference>
<dbReference type="InterPro" id="IPR003583">
    <property type="entry name" value="Hlx-hairpin-Hlx_DNA-bd_motif"/>
</dbReference>
<dbReference type="InterPro" id="IPR012340">
    <property type="entry name" value="NA-bd_OB-fold"/>
</dbReference>
<dbReference type="InterPro" id="IPR000085">
    <property type="entry name" value="RuvA"/>
</dbReference>
<dbReference type="InterPro" id="IPR010994">
    <property type="entry name" value="RuvA_2-like"/>
</dbReference>
<dbReference type="InterPro" id="IPR011114">
    <property type="entry name" value="RuvA_C"/>
</dbReference>
<dbReference type="InterPro" id="IPR036267">
    <property type="entry name" value="RuvA_C_sf"/>
</dbReference>
<dbReference type="NCBIfam" id="TIGR00084">
    <property type="entry name" value="ruvA"/>
    <property type="match status" value="1"/>
</dbReference>
<dbReference type="Pfam" id="PF14520">
    <property type="entry name" value="HHH_5"/>
    <property type="match status" value="1"/>
</dbReference>
<dbReference type="Pfam" id="PF07499">
    <property type="entry name" value="RuvA_C"/>
    <property type="match status" value="1"/>
</dbReference>
<dbReference type="Pfam" id="PF01330">
    <property type="entry name" value="RuvA_N"/>
    <property type="match status" value="1"/>
</dbReference>
<dbReference type="SMART" id="SM00278">
    <property type="entry name" value="HhH1"/>
    <property type="match status" value="2"/>
</dbReference>
<dbReference type="SUPFAM" id="SSF46929">
    <property type="entry name" value="DNA helicase RuvA subunit, C-terminal domain"/>
    <property type="match status" value="1"/>
</dbReference>
<dbReference type="SUPFAM" id="SSF50249">
    <property type="entry name" value="Nucleic acid-binding proteins"/>
    <property type="match status" value="1"/>
</dbReference>
<dbReference type="SUPFAM" id="SSF47781">
    <property type="entry name" value="RuvA domain 2-like"/>
    <property type="match status" value="1"/>
</dbReference>
<feature type="chain" id="PRO_1000195159" description="Holliday junction branch migration complex subunit RuvA">
    <location>
        <begin position="1"/>
        <end position="196"/>
    </location>
</feature>
<feature type="region of interest" description="Domain I" evidence="1">
    <location>
        <begin position="1"/>
        <end position="63"/>
    </location>
</feature>
<feature type="region of interest" description="Domain II" evidence="1">
    <location>
        <begin position="64"/>
        <end position="138"/>
    </location>
</feature>
<feature type="region of interest" description="Flexible linker" evidence="1">
    <location>
        <begin position="138"/>
        <end position="142"/>
    </location>
</feature>
<feature type="region of interest" description="Domain III" evidence="1">
    <location>
        <begin position="143"/>
        <end position="196"/>
    </location>
</feature>
<accession>C1AF62</accession>
<sequence length="196" mass="20189">MIASVRGEVLEVALDHVVIEAAGVGYRVNATPATLATLRQGTEARLITAMIVREDSMTLYGFPDGETRDLFLTLLSVSGVGPRLAMAALAVHDAPALRQVLADGNVAALTRVPGIGKRGAERMVLELRDKVGVAATGGALSTNGHAVRSPVVEALVGLGFAAKQAEEATDTVLAANHDATTSSALRSALSLLGKAR</sequence>
<evidence type="ECO:0000255" key="1">
    <source>
        <dbReference type="HAMAP-Rule" id="MF_00031"/>
    </source>
</evidence>
<gene>
    <name evidence="1" type="primary">ruvA</name>
    <name type="ordered locus">JTY_2610</name>
</gene>
<proteinExistence type="inferred from homology"/>
<protein>
    <recommendedName>
        <fullName evidence="1">Holliday junction branch migration complex subunit RuvA</fullName>
    </recommendedName>
</protein>
<organism>
    <name type="scientific">Mycobacterium bovis (strain BCG / Tokyo 172 / ATCC 35737 / TMC 1019)</name>
    <dbReference type="NCBI Taxonomy" id="561275"/>
    <lineage>
        <taxon>Bacteria</taxon>
        <taxon>Bacillati</taxon>
        <taxon>Actinomycetota</taxon>
        <taxon>Actinomycetes</taxon>
        <taxon>Mycobacteriales</taxon>
        <taxon>Mycobacteriaceae</taxon>
        <taxon>Mycobacterium</taxon>
        <taxon>Mycobacterium tuberculosis complex</taxon>
    </lineage>
</organism>